<evidence type="ECO:0000250" key="1">
    <source>
        <dbReference type="UniProtKB" id="P62273"/>
    </source>
</evidence>
<evidence type="ECO:0000250" key="2">
    <source>
        <dbReference type="UniProtKB" id="Q6QAP6"/>
    </source>
</evidence>
<evidence type="ECO:0000305" key="3"/>
<feature type="chain" id="PRO_0000273965" description="Small ribosomal subunit protein uS14">
    <location>
        <begin position="1"/>
        <end position="56"/>
    </location>
</feature>
<feature type="binding site" evidence="1">
    <location>
        <position position="21"/>
    </location>
    <ligand>
        <name>Zn(2+)</name>
        <dbReference type="ChEBI" id="CHEBI:29105"/>
    </ligand>
</feature>
<feature type="binding site" evidence="1">
    <location>
        <position position="24"/>
    </location>
    <ligand>
        <name>Zn(2+)</name>
        <dbReference type="ChEBI" id="CHEBI:29105"/>
    </ligand>
</feature>
<feature type="binding site" evidence="1">
    <location>
        <position position="39"/>
    </location>
    <ligand>
        <name>Zn(2+)</name>
        <dbReference type="ChEBI" id="CHEBI:29105"/>
    </ligand>
</feature>
<feature type="binding site" evidence="1">
    <location>
        <position position="42"/>
    </location>
    <ligand>
        <name>Zn(2+)</name>
        <dbReference type="ChEBI" id="CHEBI:29105"/>
    </ligand>
</feature>
<feature type="modified residue" description="Phosphoserine" evidence="1">
    <location>
        <position position="9"/>
    </location>
</feature>
<feature type="modified residue" description="Omega-N-methylarginine" evidence="1">
    <location>
        <position position="12"/>
    </location>
</feature>
<feature type="modified residue" description="N6-acetyllysine" evidence="1">
    <location>
        <position position="48"/>
    </location>
</feature>
<comment type="function">
    <text evidence="1">Component of the small ribosomal subunit. The ribosome is a large ribonucleoprotein complex responsible for the synthesis of proteins in the cell.</text>
</comment>
<comment type="cofactor">
    <cofactor evidence="1">
        <name>Zn(2+)</name>
        <dbReference type="ChEBI" id="CHEBI:29105"/>
    </cofactor>
    <text evidence="1">Binds 1 zinc ion per subunit.</text>
</comment>
<comment type="subunit">
    <text evidence="2">Component of the 40S small ribosomal subunit.</text>
</comment>
<comment type="subcellular location">
    <subcellularLocation>
        <location evidence="1">Cytoplasm</location>
        <location evidence="1">Cytosol</location>
    </subcellularLocation>
    <subcellularLocation>
        <location evidence="1">Cytoplasm</location>
    </subcellularLocation>
    <subcellularLocation>
        <location evidence="2">Rough endoplasmic reticulum</location>
    </subcellularLocation>
    <text evidence="1 2">Detected on cytosolic polysomes (By similarity). Detected in ribosomes that are associated with the rough endoplasmic reticulum (By similarity).</text>
</comment>
<comment type="similarity">
    <text evidence="3">Belongs to the universal ribosomal protein uS14 family.</text>
</comment>
<proteinExistence type="inferred from homology"/>
<sequence>MGHQQLYWSHPRKFGQGSRSCRVCSNRHGLIRKYGLNMCRQCFRQYAKDIGFIKLD</sequence>
<reference key="1">
    <citation type="submission" date="2004-11" db="EMBL/GenBank/DDBJ databases">
        <authorList>
            <consortium name="The German cDNA consortium"/>
        </authorList>
    </citation>
    <scope>NUCLEOTIDE SEQUENCE [LARGE SCALE MRNA]</scope>
    <source>
        <tissue>Heart</tissue>
    </source>
</reference>
<protein>
    <recommendedName>
        <fullName evidence="3">Small ribosomal subunit protein uS14</fullName>
    </recommendedName>
    <alternativeName>
        <fullName>40S ribosomal protein S29</fullName>
    </alternativeName>
</protein>
<accession>Q5R9J0</accession>
<gene>
    <name type="primary">RPS29</name>
</gene>
<keyword id="KW-0007">Acetylation</keyword>
<keyword id="KW-0963">Cytoplasm</keyword>
<keyword id="KW-0256">Endoplasmic reticulum</keyword>
<keyword id="KW-0479">Metal-binding</keyword>
<keyword id="KW-0488">Methylation</keyword>
<keyword id="KW-0597">Phosphoprotein</keyword>
<keyword id="KW-1185">Reference proteome</keyword>
<keyword id="KW-0687">Ribonucleoprotein</keyword>
<keyword id="KW-0689">Ribosomal protein</keyword>
<keyword id="KW-0862">Zinc</keyword>
<name>RS29_PONAB</name>
<organism>
    <name type="scientific">Pongo abelii</name>
    <name type="common">Sumatran orangutan</name>
    <name type="synonym">Pongo pygmaeus abelii</name>
    <dbReference type="NCBI Taxonomy" id="9601"/>
    <lineage>
        <taxon>Eukaryota</taxon>
        <taxon>Metazoa</taxon>
        <taxon>Chordata</taxon>
        <taxon>Craniata</taxon>
        <taxon>Vertebrata</taxon>
        <taxon>Euteleostomi</taxon>
        <taxon>Mammalia</taxon>
        <taxon>Eutheria</taxon>
        <taxon>Euarchontoglires</taxon>
        <taxon>Primates</taxon>
        <taxon>Haplorrhini</taxon>
        <taxon>Catarrhini</taxon>
        <taxon>Hominidae</taxon>
        <taxon>Pongo</taxon>
    </lineage>
</organism>
<dbReference type="EMBL" id="CR859397">
    <property type="protein sequence ID" value="CAH91570.1"/>
    <property type="molecule type" value="mRNA"/>
</dbReference>
<dbReference type="RefSeq" id="NP_001127434.1">
    <property type="nucleotide sequence ID" value="NM_001133962.2"/>
</dbReference>
<dbReference type="SMR" id="Q5R9J0"/>
<dbReference type="FunCoup" id="Q5R9J0">
    <property type="interactions" value="1503"/>
</dbReference>
<dbReference type="STRING" id="9601.ENSPPYP00000006576"/>
<dbReference type="Ensembl" id="ENSPPYT00000062218.1">
    <property type="protein sequence ID" value="ENSPPYP00000044973.1"/>
    <property type="gene ID" value="ENSPPYG00000005785.3"/>
</dbReference>
<dbReference type="GeneID" id="100174505"/>
<dbReference type="KEGG" id="pon:100174505"/>
<dbReference type="CTD" id="6235"/>
<dbReference type="eggNOG" id="KOG3506">
    <property type="taxonomic scope" value="Eukaryota"/>
</dbReference>
<dbReference type="GeneTree" id="ENSGT00940000161931"/>
<dbReference type="HOGENOM" id="CLU_177289_1_1_1"/>
<dbReference type="InParanoid" id="Q5R9J0"/>
<dbReference type="OrthoDB" id="9816073at2759"/>
<dbReference type="TreeFam" id="TF300217"/>
<dbReference type="Proteomes" id="UP000001595">
    <property type="component" value="Chromosome 14"/>
</dbReference>
<dbReference type="GO" id="GO:0098556">
    <property type="term" value="C:cytoplasmic side of rough endoplasmic reticulum membrane"/>
    <property type="evidence" value="ECO:0000250"/>
    <property type="project" value="UniProtKB"/>
</dbReference>
<dbReference type="GO" id="GO:0022627">
    <property type="term" value="C:cytosolic small ribosomal subunit"/>
    <property type="evidence" value="ECO:0000250"/>
    <property type="project" value="UniProtKB"/>
</dbReference>
<dbReference type="GO" id="GO:0005840">
    <property type="term" value="C:ribosome"/>
    <property type="evidence" value="ECO:0000250"/>
    <property type="project" value="UniProtKB"/>
</dbReference>
<dbReference type="GO" id="GO:0003735">
    <property type="term" value="F:structural constituent of ribosome"/>
    <property type="evidence" value="ECO:0007669"/>
    <property type="project" value="InterPro"/>
</dbReference>
<dbReference type="GO" id="GO:0008270">
    <property type="term" value="F:zinc ion binding"/>
    <property type="evidence" value="ECO:0000250"/>
    <property type="project" value="UniProtKB"/>
</dbReference>
<dbReference type="GO" id="GO:0002181">
    <property type="term" value="P:cytoplasmic translation"/>
    <property type="evidence" value="ECO:0000250"/>
    <property type="project" value="UniProtKB"/>
</dbReference>
<dbReference type="FunFam" id="4.10.830.10:FF:000002">
    <property type="entry name" value="40S ribosomal protein S29"/>
    <property type="match status" value="1"/>
</dbReference>
<dbReference type="Gene3D" id="4.10.830.10">
    <property type="entry name" value="30s Ribosomal Protein S14, Chain N"/>
    <property type="match status" value="1"/>
</dbReference>
<dbReference type="InterPro" id="IPR001209">
    <property type="entry name" value="Ribosomal_uS14"/>
</dbReference>
<dbReference type="InterPro" id="IPR018271">
    <property type="entry name" value="Ribosomal_uS14_CS"/>
</dbReference>
<dbReference type="InterPro" id="IPR039744">
    <property type="entry name" value="RIbosomal_uS14_euk_arc"/>
</dbReference>
<dbReference type="InterPro" id="IPR043140">
    <property type="entry name" value="Ribosomal_uS14_sf"/>
</dbReference>
<dbReference type="NCBIfam" id="NF004424">
    <property type="entry name" value="PRK05766.1"/>
    <property type="match status" value="1"/>
</dbReference>
<dbReference type="PANTHER" id="PTHR12010">
    <property type="entry name" value="40S RIBOSOMAL PROTEIN S29"/>
    <property type="match status" value="1"/>
</dbReference>
<dbReference type="PANTHER" id="PTHR12010:SF26">
    <property type="entry name" value="SMALL RIBOSOMAL SUBUNIT PROTEIN US14"/>
    <property type="match status" value="1"/>
</dbReference>
<dbReference type="Pfam" id="PF00253">
    <property type="entry name" value="Ribosomal_S14"/>
    <property type="match status" value="1"/>
</dbReference>
<dbReference type="PROSITE" id="PS00527">
    <property type="entry name" value="RIBOSOMAL_S14"/>
    <property type="match status" value="1"/>
</dbReference>